<proteinExistence type="inferred from homology"/>
<organism>
    <name type="scientific">Methanosarcina mazei (strain ATCC BAA-159 / DSM 3647 / Goe1 / Go1 / JCM 11833 / OCM 88)</name>
    <name type="common">Methanosarcina frisia</name>
    <dbReference type="NCBI Taxonomy" id="192952"/>
    <lineage>
        <taxon>Archaea</taxon>
        <taxon>Methanobacteriati</taxon>
        <taxon>Methanobacteriota</taxon>
        <taxon>Stenosarchaea group</taxon>
        <taxon>Methanomicrobia</taxon>
        <taxon>Methanosarcinales</taxon>
        <taxon>Methanosarcinaceae</taxon>
        <taxon>Methanosarcina</taxon>
    </lineage>
</organism>
<reference key="1">
    <citation type="journal article" date="2002" name="J. Mol. Microbiol. Biotechnol.">
        <title>The genome of Methanosarcina mazei: evidence for lateral gene transfer between Bacteria and Archaea.</title>
        <authorList>
            <person name="Deppenmeier U."/>
            <person name="Johann A."/>
            <person name="Hartsch T."/>
            <person name="Merkl R."/>
            <person name="Schmitz R.A."/>
            <person name="Martinez-Arias R."/>
            <person name="Henne A."/>
            <person name="Wiezer A."/>
            <person name="Baeumer S."/>
            <person name="Jacobi C."/>
            <person name="Brueggemann H."/>
            <person name="Lienard T."/>
            <person name="Christmann A."/>
            <person name="Boemecke M."/>
            <person name="Steckel S."/>
            <person name="Bhattacharyya A."/>
            <person name="Lykidis A."/>
            <person name="Overbeek R."/>
            <person name="Klenk H.-P."/>
            <person name="Gunsalus R.P."/>
            <person name="Fritz H.-J."/>
            <person name="Gottschalk G."/>
        </authorList>
    </citation>
    <scope>NUCLEOTIDE SEQUENCE [LARGE SCALE GENOMIC DNA]</scope>
    <source>
        <strain>ATCC BAA-159 / DSM 3647 / Goe1 / Go1 / JCM 11833 / OCM 88</strain>
    </source>
</reference>
<comment type="function">
    <text evidence="1">Probably part of an ABC transporter complex. Responsible for energy coupling to the transport system (By similarity).</text>
</comment>
<comment type="subcellular location">
    <subcellularLocation>
        <location evidence="1">Cell membrane</location>
        <topology evidence="1">Peripheral membrane protein</topology>
    </subcellularLocation>
</comment>
<comment type="similarity">
    <text evidence="4">Belongs to the ABC transporter superfamily.</text>
</comment>
<protein>
    <recommendedName>
        <fullName>Putative ABC transporter ATP-binding protein MM_0887</fullName>
        <ecNumber>7.-.-.-</ecNumber>
    </recommendedName>
</protein>
<accession>Q8PYH5</accession>
<feature type="chain" id="PRO_0000092147" description="Putative ABC transporter ATP-binding protein MM_0887">
    <location>
        <begin position="1"/>
        <end position="327"/>
    </location>
</feature>
<feature type="domain" description="ABC transporter" evidence="2">
    <location>
        <begin position="47"/>
        <end position="282"/>
    </location>
</feature>
<feature type="region of interest" description="Disordered" evidence="3">
    <location>
        <begin position="1"/>
        <end position="44"/>
    </location>
</feature>
<feature type="compositionally biased region" description="Basic and acidic residues" evidence="3">
    <location>
        <begin position="28"/>
        <end position="44"/>
    </location>
</feature>
<feature type="binding site" evidence="2">
    <location>
        <begin position="81"/>
        <end position="88"/>
    </location>
    <ligand>
        <name>ATP</name>
        <dbReference type="ChEBI" id="CHEBI:30616"/>
    </ligand>
</feature>
<evidence type="ECO:0000250" key="1"/>
<evidence type="ECO:0000255" key="2">
    <source>
        <dbReference type="PROSITE-ProRule" id="PRU00434"/>
    </source>
</evidence>
<evidence type="ECO:0000256" key="3">
    <source>
        <dbReference type="SAM" id="MobiDB-lite"/>
    </source>
</evidence>
<evidence type="ECO:0000305" key="4"/>
<gene>
    <name type="ordered locus">MM_0887</name>
</gene>
<name>Y887_METMA</name>
<keyword id="KW-0067">ATP-binding</keyword>
<keyword id="KW-1003">Cell membrane</keyword>
<keyword id="KW-0472">Membrane</keyword>
<keyword id="KW-0547">Nucleotide-binding</keyword>
<keyword id="KW-1278">Translocase</keyword>
<keyword id="KW-0813">Transport</keyword>
<dbReference type="EC" id="7.-.-.-"/>
<dbReference type="EMBL" id="AE008384">
    <property type="protein sequence ID" value="AAM30583.1"/>
    <property type="molecule type" value="Genomic_DNA"/>
</dbReference>
<dbReference type="RefSeq" id="WP_011032837.1">
    <property type="nucleotide sequence ID" value="NC_003901.1"/>
</dbReference>
<dbReference type="SMR" id="Q8PYH5"/>
<dbReference type="GeneID" id="1479229"/>
<dbReference type="KEGG" id="mma:MM_0887"/>
<dbReference type="PATRIC" id="fig|192952.21.peg.1046"/>
<dbReference type="eggNOG" id="arCOG00202">
    <property type="taxonomic scope" value="Archaea"/>
</dbReference>
<dbReference type="HOGENOM" id="CLU_000604_1_22_2"/>
<dbReference type="Proteomes" id="UP000000595">
    <property type="component" value="Chromosome"/>
</dbReference>
<dbReference type="GO" id="GO:0043190">
    <property type="term" value="C:ATP-binding cassette (ABC) transporter complex"/>
    <property type="evidence" value="ECO:0007669"/>
    <property type="project" value="TreeGrafter"/>
</dbReference>
<dbReference type="GO" id="GO:0005524">
    <property type="term" value="F:ATP binding"/>
    <property type="evidence" value="ECO:0007669"/>
    <property type="project" value="UniProtKB-KW"/>
</dbReference>
<dbReference type="GO" id="GO:0016887">
    <property type="term" value="F:ATP hydrolysis activity"/>
    <property type="evidence" value="ECO:0007669"/>
    <property type="project" value="InterPro"/>
</dbReference>
<dbReference type="GO" id="GO:0042626">
    <property type="term" value="F:ATPase-coupled transmembrane transporter activity"/>
    <property type="evidence" value="ECO:0007669"/>
    <property type="project" value="TreeGrafter"/>
</dbReference>
<dbReference type="GO" id="GO:0006824">
    <property type="term" value="P:cobalt ion transport"/>
    <property type="evidence" value="ECO:0007669"/>
    <property type="project" value="InterPro"/>
</dbReference>
<dbReference type="CDD" id="cd03225">
    <property type="entry name" value="ABC_cobalt_CbiO_domain1"/>
    <property type="match status" value="1"/>
</dbReference>
<dbReference type="FunFam" id="3.40.50.300:FF:000224">
    <property type="entry name" value="Energy-coupling factor transporter ATP-binding protein EcfA"/>
    <property type="match status" value="1"/>
</dbReference>
<dbReference type="Gene3D" id="3.40.50.300">
    <property type="entry name" value="P-loop containing nucleotide triphosphate hydrolases"/>
    <property type="match status" value="1"/>
</dbReference>
<dbReference type="InterPro" id="IPR003593">
    <property type="entry name" value="AAA+_ATPase"/>
</dbReference>
<dbReference type="InterPro" id="IPR003439">
    <property type="entry name" value="ABC_transporter-like_ATP-bd"/>
</dbReference>
<dbReference type="InterPro" id="IPR017871">
    <property type="entry name" value="ABC_transporter-like_CS"/>
</dbReference>
<dbReference type="InterPro" id="IPR015856">
    <property type="entry name" value="ABC_transpr_CbiO/EcfA_su"/>
</dbReference>
<dbReference type="InterPro" id="IPR005876">
    <property type="entry name" value="Co_trans_ATP-bd"/>
</dbReference>
<dbReference type="InterPro" id="IPR050095">
    <property type="entry name" value="ECF_ABC_transporter_ATP-bd"/>
</dbReference>
<dbReference type="InterPro" id="IPR027417">
    <property type="entry name" value="P-loop_NTPase"/>
</dbReference>
<dbReference type="NCBIfam" id="TIGR01166">
    <property type="entry name" value="cbiO"/>
    <property type="match status" value="1"/>
</dbReference>
<dbReference type="PANTHER" id="PTHR43553:SF24">
    <property type="entry name" value="ENERGY-COUPLING FACTOR TRANSPORTER ATP-BINDING PROTEIN ECFA1"/>
    <property type="match status" value="1"/>
</dbReference>
<dbReference type="PANTHER" id="PTHR43553">
    <property type="entry name" value="HEAVY METAL TRANSPORTER"/>
    <property type="match status" value="1"/>
</dbReference>
<dbReference type="Pfam" id="PF00005">
    <property type="entry name" value="ABC_tran"/>
    <property type="match status" value="1"/>
</dbReference>
<dbReference type="SMART" id="SM00382">
    <property type="entry name" value="AAA"/>
    <property type="match status" value="1"/>
</dbReference>
<dbReference type="SUPFAM" id="SSF52540">
    <property type="entry name" value="P-loop containing nucleoside triphosphate hydrolases"/>
    <property type="match status" value="1"/>
</dbReference>
<dbReference type="PROSITE" id="PS00211">
    <property type="entry name" value="ABC_TRANSPORTER_1"/>
    <property type="match status" value="1"/>
</dbReference>
<dbReference type="PROSITE" id="PS50893">
    <property type="entry name" value="ABC_TRANSPORTER_2"/>
    <property type="match status" value="1"/>
</dbReference>
<sequence>MSKSTPLKSSIIRADLPEQAEGRTGPETGKDPEKTGNSEGKTDTPVIEIKDLCHRYPHLEANALDRINLRIYRGERVAVLGANGAGKSTLFKHLNGILRPLSGEVLVKGEKITKKNVRMCRGTVGIVFQDPDDQVLAPSVEEDVAFGPINMGLSREEVKMRVKEALEMVGLNGFEERAPHHLSGGQKKLVAIAGILAMRPEVIVLDEPTAGLDPLSSARVLKLITKMNRELGITLLLSTHDVDVVPYFAERVFVLHHGKLEASGSPEEIFNDPALLRKAHLRLPRVAEVFEMLKQEGVDVNIQITAETARDEILRVIRSENRKAEMK</sequence>